<sequence>MDINLFDFHLPEELIAQTPLEKRETSRLMVLDRETGDIEHKHFSDILAYLHEGDCLVLNETKVMPARLHGVKEDTGAHIEVLLLKQEEGDTWETLVKPAKRVKEGTVISFGEGKLKATCVGTADQGGRQLEFSYDGIFYEILDELGEMPLPPYIKETLEDRDRYQTVYAKEIGSAAAPTAGLHFTEELLEKLQQKGVKLAFITLHVGLGTFRPVSTDKIEDHHMHAEYYHMSQETADLLNDVKVNGGRIITVGTTSTRTLETIATEHDGKLCGASGWTDIFMYPGYEFKAIDGLITNFHLPKSTLIMLVSAFAGRENVLHAYNEAVKEKYRFFSFGDAMFLASHAKERMK</sequence>
<keyword id="KW-0963">Cytoplasm</keyword>
<keyword id="KW-0671">Queuosine biosynthesis</keyword>
<keyword id="KW-0949">S-adenosyl-L-methionine</keyword>
<keyword id="KW-0808">Transferase</keyword>
<name>QUEA_BACCN</name>
<gene>
    <name evidence="1" type="primary">queA</name>
    <name type="ordered locus">Bcer98_3135</name>
</gene>
<organism>
    <name type="scientific">Bacillus cytotoxicus (strain DSM 22905 / CIP 110041 / 391-98 / NVH 391-98)</name>
    <dbReference type="NCBI Taxonomy" id="315749"/>
    <lineage>
        <taxon>Bacteria</taxon>
        <taxon>Bacillati</taxon>
        <taxon>Bacillota</taxon>
        <taxon>Bacilli</taxon>
        <taxon>Bacillales</taxon>
        <taxon>Bacillaceae</taxon>
        <taxon>Bacillus</taxon>
        <taxon>Bacillus cereus group</taxon>
    </lineage>
</organism>
<evidence type="ECO:0000255" key="1">
    <source>
        <dbReference type="HAMAP-Rule" id="MF_00113"/>
    </source>
</evidence>
<protein>
    <recommendedName>
        <fullName evidence="1">S-adenosylmethionine:tRNA ribosyltransferase-isomerase</fullName>
        <ecNumber evidence="1">2.4.99.17</ecNumber>
    </recommendedName>
    <alternativeName>
        <fullName evidence="1">Queuosine biosynthesis protein QueA</fullName>
    </alternativeName>
</protein>
<comment type="function">
    <text evidence="1">Transfers and isomerizes the ribose moiety from AdoMet to the 7-aminomethyl group of 7-deazaguanine (preQ1-tRNA) to give epoxyqueuosine (oQ-tRNA).</text>
</comment>
<comment type="catalytic activity">
    <reaction evidence="1">
        <text>7-aminomethyl-7-carbaguanosine(34) in tRNA + S-adenosyl-L-methionine = epoxyqueuosine(34) in tRNA + adenine + L-methionine + 2 H(+)</text>
        <dbReference type="Rhea" id="RHEA:32155"/>
        <dbReference type="Rhea" id="RHEA-COMP:10342"/>
        <dbReference type="Rhea" id="RHEA-COMP:18582"/>
        <dbReference type="ChEBI" id="CHEBI:15378"/>
        <dbReference type="ChEBI" id="CHEBI:16708"/>
        <dbReference type="ChEBI" id="CHEBI:57844"/>
        <dbReference type="ChEBI" id="CHEBI:59789"/>
        <dbReference type="ChEBI" id="CHEBI:82833"/>
        <dbReference type="ChEBI" id="CHEBI:194443"/>
        <dbReference type="EC" id="2.4.99.17"/>
    </reaction>
</comment>
<comment type="pathway">
    <text evidence="1">tRNA modification; tRNA-queuosine biosynthesis.</text>
</comment>
<comment type="subunit">
    <text evidence="1">Monomer.</text>
</comment>
<comment type="subcellular location">
    <subcellularLocation>
        <location evidence="1">Cytoplasm</location>
    </subcellularLocation>
</comment>
<comment type="similarity">
    <text evidence="1">Belongs to the QueA family.</text>
</comment>
<dbReference type="EC" id="2.4.99.17" evidence="1"/>
<dbReference type="EMBL" id="CP000764">
    <property type="protein sequence ID" value="ABS23358.1"/>
    <property type="molecule type" value="Genomic_DNA"/>
</dbReference>
<dbReference type="RefSeq" id="WP_012095595.1">
    <property type="nucleotide sequence ID" value="NC_009674.1"/>
</dbReference>
<dbReference type="SMR" id="A7GTA0"/>
<dbReference type="STRING" id="315749.Bcer98_3135"/>
<dbReference type="GeneID" id="33898383"/>
<dbReference type="KEGG" id="bcy:Bcer98_3135"/>
<dbReference type="eggNOG" id="COG0809">
    <property type="taxonomic scope" value="Bacteria"/>
</dbReference>
<dbReference type="HOGENOM" id="CLU_039110_1_0_9"/>
<dbReference type="OrthoDB" id="9805933at2"/>
<dbReference type="UniPathway" id="UPA00392"/>
<dbReference type="Proteomes" id="UP000002300">
    <property type="component" value="Chromosome"/>
</dbReference>
<dbReference type="GO" id="GO:0005737">
    <property type="term" value="C:cytoplasm"/>
    <property type="evidence" value="ECO:0007669"/>
    <property type="project" value="UniProtKB-SubCell"/>
</dbReference>
<dbReference type="GO" id="GO:0051075">
    <property type="term" value="F:S-adenosylmethionine:tRNA ribosyltransferase-isomerase activity"/>
    <property type="evidence" value="ECO:0007669"/>
    <property type="project" value="UniProtKB-EC"/>
</dbReference>
<dbReference type="GO" id="GO:0008616">
    <property type="term" value="P:queuosine biosynthetic process"/>
    <property type="evidence" value="ECO:0007669"/>
    <property type="project" value="UniProtKB-UniRule"/>
</dbReference>
<dbReference type="GO" id="GO:0002099">
    <property type="term" value="P:tRNA wobble guanine modification"/>
    <property type="evidence" value="ECO:0007669"/>
    <property type="project" value="TreeGrafter"/>
</dbReference>
<dbReference type="FunFam" id="2.40.10.240:FF:000002">
    <property type="entry name" value="S-adenosylmethionine:tRNA ribosyltransferase-isomerase"/>
    <property type="match status" value="1"/>
</dbReference>
<dbReference type="FunFam" id="3.40.1780.10:FF:000001">
    <property type="entry name" value="S-adenosylmethionine:tRNA ribosyltransferase-isomerase"/>
    <property type="match status" value="1"/>
</dbReference>
<dbReference type="Gene3D" id="2.40.10.240">
    <property type="entry name" value="QueA-like"/>
    <property type="match status" value="1"/>
</dbReference>
<dbReference type="Gene3D" id="3.40.1780.10">
    <property type="entry name" value="QueA-like"/>
    <property type="match status" value="1"/>
</dbReference>
<dbReference type="HAMAP" id="MF_00113">
    <property type="entry name" value="QueA"/>
    <property type="match status" value="1"/>
</dbReference>
<dbReference type="InterPro" id="IPR003699">
    <property type="entry name" value="QueA"/>
</dbReference>
<dbReference type="InterPro" id="IPR042118">
    <property type="entry name" value="QueA_dom1"/>
</dbReference>
<dbReference type="InterPro" id="IPR042119">
    <property type="entry name" value="QueA_dom2"/>
</dbReference>
<dbReference type="InterPro" id="IPR036100">
    <property type="entry name" value="QueA_sf"/>
</dbReference>
<dbReference type="NCBIfam" id="NF001140">
    <property type="entry name" value="PRK00147.1"/>
    <property type="match status" value="1"/>
</dbReference>
<dbReference type="NCBIfam" id="TIGR00113">
    <property type="entry name" value="queA"/>
    <property type="match status" value="1"/>
</dbReference>
<dbReference type="PANTHER" id="PTHR30307">
    <property type="entry name" value="S-ADENOSYLMETHIONINE:TRNA RIBOSYLTRANSFERASE-ISOMERASE"/>
    <property type="match status" value="1"/>
</dbReference>
<dbReference type="PANTHER" id="PTHR30307:SF0">
    <property type="entry name" value="S-ADENOSYLMETHIONINE:TRNA RIBOSYLTRANSFERASE-ISOMERASE"/>
    <property type="match status" value="1"/>
</dbReference>
<dbReference type="Pfam" id="PF02547">
    <property type="entry name" value="Queuosine_synth"/>
    <property type="match status" value="1"/>
</dbReference>
<dbReference type="SUPFAM" id="SSF111337">
    <property type="entry name" value="QueA-like"/>
    <property type="match status" value="1"/>
</dbReference>
<proteinExistence type="inferred from homology"/>
<accession>A7GTA0</accession>
<reference key="1">
    <citation type="journal article" date="2008" name="Chem. Biol. Interact.">
        <title>Extending the Bacillus cereus group genomics to putative food-borne pathogens of different toxicity.</title>
        <authorList>
            <person name="Lapidus A."/>
            <person name="Goltsman E."/>
            <person name="Auger S."/>
            <person name="Galleron N."/>
            <person name="Segurens B."/>
            <person name="Dossat C."/>
            <person name="Land M.L."/>
            <person name="Broussolle V."/>
            <person name="Brillard J."/>
            <person name="Guinebretiere M.-H."/>
            <person name="Sanchis V."/>
            <person name="Nguen-the C."/>
            <person name="Lereclus D."/>
            <person name="Richardson P."/>
            <person name="Wincker P."/>
            <person name="Weissenbach J."/>
            <person name="Ehrlich S.D."/>
            <person name="Sorokin A."/>
        </authorList>
    </citation>
    <scope>NUCLEOTIDE SEQUENCE [LARGE SCALE GENOMIC DNA]</scope>
    <source>
        <strain>DSM 22905 / CIP 110041 / 391-98 / NVH 391-98</strain>
    </source>
</reference>
<feature type="chain" id="PRO_1000075992" description="S-adenosylmethionine:tRNA ribosyltransferase-isomerase">
    <location>
        <begin position="1"/>
        <end position="350"/>
    </location>
</feature>